<proteinExistence type="inferred from homology"/>
<organism>
    <name type="scientific">Trypanosoma cruzi</name>
    <dbReference type="NCBI Taxonomy" id="5693"/>
    <lineage>
        <taxon>Eukaryota</taxon>
        <taxon>Discoba</taxon>
        <taxon>Euglenozoa</taxon>
        <taxon>Kinetoplastea</taxon>
        <taxon>Metakinetoplastina</taxon>
        <taxon>Trypanosomatida</taxon>
        <taxon>Trypanosomatidae</taxon>
        <taxon>Trypanosoma</taxon>
        <taxon>Schizotrypanum</taxon>
    </lineage>
</organism>
<sequence>MSDEEQSAIVCDNGSGMVKAGFSGDDALCHVFPSIVGRPKNEQAMMGSASKKLFVGDEAQAKRGVLSLKYPIEHGIVTNWDDMEKIWHHTFYNDVRVNPESHSVLLTEAPMNPKQNREKMTQIMFETFGVPAMYVGIQAVLSLYSSGRTTGIVLDAGDGVTHTVPIYEGYSLPHAIRRMDMAGRDLTEYLMKLLMESGMTFTTSAEKEIVRNVKEQLCYVALDFDEEVTNSAKTVNEEPFELPDGTIMQVGNQRFRCPEALFKPMLIGLDEAPGFHEMTFQSINKCDIDVRRDLYGNIVLSGGTTMFKNLPERLGKEISNLAPSSIKPKVVAPPERKYSVWIGGSILSSLTTFQTMWIKKSEYDEAGPSIVHNKCF</sequence>
<dbReference type="EC" id="3.6.4.-" evidence="1"/>
<dbReference type="EMBL" id="U20234">
    <property type="protein sequence ID" value="AAA62141.1"/>
    <property type="molecule type" value="Genomic_DNA"/>
</dbReference>
<dbReference type="EMBL" id="U20234">
    <property type="protein sequence ID" value="AAA62142.1"/>
    <property type="molecule type" value="Genomic_DNA"/>
</dbReference>
<dbReference type="SMR" id="P53477"/>
<dbReference type="VEuPathDB" id="TriTrypDB:BCY84_19899"/>
<dbReference type="VEuPathDB" id="TriTrypDB:C3747_51g142"/>
<dbReference type="VEuPathDB" id="TriTrypDB:C4B63_38g39"/>
<dbReference type="VEuPathDB" id="TriTrypDB:ECC02_005290"/>
<dbReference type="VEuPathDB" id="TriTrypDB:Tc_MARK_5934"/>
<dbReference type="VEuPathDB" id="TriTrypDB:TcBrA4_0055380"/>
<dbReference type="VEuPathDB" id="TriTrypDB:TcCL_NonESM07913"/>
<dbReference type="VEuPathDB" id="TriTrypDB:TcCLB.510127.79"/>
<dbReference type="VEuPathDB" id="TriTrypDB:TcCLB.510571.30"/>
<dbReference type="VEuPathDB" id="TriTrypDB:TCDM_05641"/>
<dbReference type="VEuPathDB" id="TriTrypDB:TcG_03688"/>
<dbReference type="VEuPathDB" id="TriTrypDB:TCSYLVIO_008645"/>
<dbReference type="VEuPathDB" id="TriTrypDB:TcYC6_0025570"/>
<dbReference type="GO" id="GO:0005737">
    <property type="term" value="C:cytoplasm"/>
    <property type="evidence" value="ECO:0007669"/>
    <property type="project" value="UniProtKB-KW"/>
</dbReference>
<dbReference type="GO" id="GO:0005856">
    <property type="term" value="C:cytoskeleton"/>
    <property type="evidence" value="ECO:0007669"/>
    <property type="project" value="UniProtKB-SubCell"/>
</dbReference>
<dbReference type="GO" id="GO:0005524">
    <property type="term" value="F:ATP binding"/>
    <property type="evidence" value="ECO:0007669"/>
    <property type="project" value="UniProtKB-KW"/>
</dbReference>
<dbReference type="GO" id="GO:0016787">
    <property type="term" value="F:hydrolase activity"/>
    <property type="evidence" value="ECO:0007669"/>
    <property type="project" value="UniProtKB-KW"/>
</dbReference>
<dbReference type="FunFam" id="3.90.640.10:FF:000007">
    <property type="entry name" value="Actin like 7B"/>
    <property type="match status" value="1"/>
</dbReference>
<dbReference type="FunFam" id="3.30.420.40:FF:000205">
    <property type="entry name" value="Actin, alpha skeletal muscle"/>
    <property type="match status" value="1"/>
</dbReference>
<dbReference type="FunFam" id="3.30.420.40:FF:000018">
    <property type="entry name" value="Actin-like protein (Centractin)"/>
    <property type="match status" value="1"/>
</dbReference>
<dbReference type="Gene3D" id="3.30.420.40">
    <property type="match status" value="2"/>
</dbReference>
<dbReference type="Gene3D" id="3.90.640.10">
    <property type="entry name" value="Actin, Chain A, domain 4"/>
    <property type="match status" value="1"/>
</dbReference>
<dbReference type="InterPro" id="IPR004000">
    <property type="entry name" value="Actin"/>
</dbReference>
<dbReference type="InterPro" id="IPR020902">
    <property type="entry name" value="Actin/actin-like_CS"/>
</dbReference>
<dbReference type="InterPro" id="IPR004001">
    <property type="entry name" value="Actin_CS"/>
</dbReference>
<dbReference type="InterPro" id="IPR043129">
    <property type="entry name" value="ATPase_NBD"/>
</dbReference>
<dbReference type="PANTHER" id="PTHR11937">
    <property type="entry name" value="ACTIN"/>
    <property type="match status" value="1"/>
</dbReference>
<dbReference type="Pfam" id="PF00022">
    <property type="entry name" value="Actin"/>
    <property type="match status" value="1"/>
</dbReference>
<dbReference type="PRINTS" id="PR00190">
    <property type="entry name" value="ACTIN"/>
</dbReference>
<dbReference type="SMART" id="SM00268">
    <property type="entry name" value="ACTIN"/>
    <property type="match status" value="1"/>
</dbReference>
<dbReference type="SUPFAM" id="SSF53067">
    <property type="entry name" value="Actin-like ATPase domain"/>
    <property type="match status" value="2"/>
</dbReference>
<dbReference type="PROSITE" id="PS00406">
    <property type="entry name" value="ACTINS_1"/>
    <property type="match status" value="1"/>
</dbReference>
<dbReference type="PROSITE" id="PS00432">
    <property type="entry name" value="ACTINS_2"/>
    <property type="match status" value="1"/>
</dbReference>
<dbReference type="PROSITE" id="PS01132">
    <property type="entry name" value="ACTINS_ACT_LIKE"/>
    <property type="match status" value="1"/>
</dbReference>
<name>ACT_TRYCR</name>
<keyword id="KW-0067">ATP-binding</keyword>
<keyword id="KW-0963">Cytoplasm</keyword>
<keyword id="KW-0206">Cytoskeleton</keyword>
<keyword id="KW-0378">Hydrolase</keyword>
<keyword id="KW-0547">Nucleotide-binding</keyword>
<protein>
    <recommendedName>
        <fullName>Actin</fullName>
        <ecNumber evidence="1">3.6.4.-</ecNumber>
    </recommendedName>
</protein>
<accession>P53477</accession>
<feature type="chain" id="PRO_0000089048" description="Actin">
    <location>
        <begin position="1"/>
        <end position="376"/>
    </location>
</feature>
<comment type="function">
    <text>Actins are highly conserved proteins that are involved in various types of cell motility and are ubiquitously expressed in all eukaryotic cells.</text>
</comment>
<comment type="catalytic activity">
    <reaction evidence="1">
        <text>ATP + H2O = ADP + phosphate + H(+)</text>
        <dbReference type="Rhea" id="RHEA:13065"/>
        <dbReference type="ChEBI" id="CHEBI:15377"/>
        <dbReference type="ChEBI" id="CHEBI:15378"/>
        <dbReference type="ChEBI" id="CHEBI:30616"/>
        <dbReference type="ChEBI" id="CHEBI:43474"/>
        <dbReference type="ChEBI" id="CHEBI:456216"/>
    </reaction>
</comment>
<comment type="subcellular location">
    <subcellularLocation>
        <location>Cytoplasm</location>
        <location>Cytoskeleton</location>
    </subcellularLocation>
</comment>
<comment type="similarity">
    <text evidence="2">Belongs to the actin family.</text>
</comment>
<reference key="1">
    <citation type="submission" date="1995-03" db="EMBL/GenBank/DDBJ databases">
        <authorList>
            <person name="Paixao J.C."/>
            <person name="Silva R."/>
            <person name="Rondinelli E."/>
        </authorList>
    </citation>
    <scope>NUCLEOTIDE SEQUENCE [GENOMIC DNA]</scope>
    <source>
        <strain>DM28C</strain>
    </source>
</reference>
<evidence type="ECO:0000250" key="1">
    <source>
        <dbReference type="UniProtKB" id="Q8I4X0"/>
    </source>
</evidence>
<evidence type="ECO:0000305" key="2"/>